<sequence>MNLQKFPRHPLTFGPTPIQPLKRLSQHLGGKVELYAKREDCNSGLAFGGNKTRKLEYLIPEAIAGGYDTLVSIGGIQSNQTRQVAAVAAHLGLKCVLVQENWVNYSDAVYDRVGNIEMSRILGADVRLDAAGFDIGIRPSWEQAMADVKQAGGKPFPIPAGCSEHPYGGLGFVGFAEEVRQQEKELGFRFDYIVVCSVTGSTQAGMVVGFAADGRARRVIGIDASATPEKTHAQILRIAQSTADLVELGQDITAEDVVLDTRYGGPEYGLPNEGTLEAIRLCARQEGMLTDPVYEGKSMHGMIERVRNGEFPAGSKVLYAHLGGVPALNAYSFLFRNG</sequence>
<protein>
    <recommendedName>
        <fullName evidence="1">1-aminocyclopropane-1-carboxylate deaminase</fullName>
        <shortName evidence="1">ACC deaminase</shortName>
        <shortName evidence="1">ACCD</shortName>
        <ecNumber evidence="1">3.5.99.7</ecNumber>
    </recommendedName>
</protein>
<reference key="1">
    <citation type="submission" date="2009-01" db="EMBL/GenBank/DDBJ databases">
        <title>Complete sequence of Diaphorobacter sp. TPSY.</title>
        <authorList>
            <consortium name="US DOE Joint Genome Institute"/>
            <person name="Lucas S."/>
            <person name="Copeland A."/>
            <person name="Lapidus A."/>
            <person name="Glavina del Rio T."/>
            <person name="Tice H."/>
            <person name="Bruce D."/>
            <person name="Goodwin L."/>
            <person name="Pitluck S."/>
            <person name="Chertkov O."/>
            <person name="Brettin T."/>
            <person name="Detter J.C."/>
            <person name="Han C."/>
            <person name="Larimer F."/>
            <person name="Land M."/>
            <person name="Hauser L."/>
            <person name="Kyrpides N."/>
            <person name="Mikhailova N."/>
            <person name="Coates J.D."/>
        </authorList>
    </citation>
    <scope>NUCLEOTIDE SEQUENCE [LARGE SCALE GENOMIC DNA]</scope>
    <source>
        <strain>TPSY</strain>
    </source>
</reference>
<gene>
    <name evidence="1" type="primary">acdS</name>
    <name type="ordered locus">Dtpsy_3150</name>
</gene>
<feature type="chain" id="PRO_1000148576" description="1-aminocyclopropane-1-carboxylate deaminase">
    <location>
        <begin position="1"/>
        <end position="338"/>
    </location>
</feature>
<feature type="active site" description="Nucleophile" evidence="1">
    <location>
        <position position="78"/>
    </location>
</feature>
<feature type="modified residue" description="N6-(pyridoxal phosphate)lysine" evidence="1">
    <location>
        <position position="51"/>
    </location>
</feature>
<accession>B9MGI8</accession>
<name>1A1D_ACIET</name>
<dbReference type="EC" id="3.5.99.7" evidence="1"/>
<dbReference type="EMBL" id="CP001392">
    <property type="protein sequence ID" value="ACM34583.1"/>
    <property type="molecule type" value="Genomic_DNA"/>
</dbReference>
<dbReference type="RefSeq" id="WP_015914408.1">
    <property type="nucleotide sequence ID" value="NC_011992.1"/>
</dbReference>
<dbReference type="SMR" id="B9MGI8"/>
<dbReference type="KEGG" id="dia:Dtpsy_3150"/>
<dbReference type="eggNOG" id="COG2515">
    <property type="taxonomic scope" value="Bacteria"/>
</dbReference>
<dbReference type="HOGENOM" id="CLU_048897_2_1_4"/>
<dbReference type="Proteomes" id="UP000000450">
    <property type="component" value="Chromosome"/>
</dbReference>
<dbReference type="GO" id="GO:0008660">
    <property type="term" value="F:1-aminocyclopropane-1-carboxylate deaminase activity"/>
    <property type="evidence" value="ECO:0007669"/>
    <property type="project" value="UniProtKB-UniRule"/>
</dbReference>
<dbReference type="GO" id="GO:0019148">
    <property type="term" value="F:D-cysteine desulfhydrase activity"/>
    <property type="evidence" value="ECO:0007669"/>
    <property type="project" value="TreeGrafter"/>
</dbReference>
<dbReference type="GO" id="GO:0030170">
    <property type="term" value="F:pyridoxal phosphate binding"/>
    <property type="evidence" value="ECO:0007669"/>
    <property type="project" value="InterPro"/>
</dbReference>
<dbReference type="GO" id="GO:0018871">
    <property type="term" value="P:1-aminocyclopropane-1-carboxylate metabolic process"/>
    <property type="evidence" value="ECO:0007669"/>
    <property type="project" value="UniProtKB-UniRule"/>
</dbReference>
<dbReference type="GO" id="GO:0009310">
    <property type="term" value="P:amine catabolic process"/>
    <property type="evidence" value="ECO:0007669"/>
    <property type="project" value="InterPro"/>
</dbReference>
<dbReference type="CDD" id="cd06449">
    <property type="entry name" value="ACCD"/>
    <property type="match status" value="1"/>
</dbReference>
<dbReference type="FunFam" id="3.40.50.1100:FF:000048">
    <property type="entry name" value="1-aminocyclopropane-1-carboxylate deaminase"/>
    <property type="match status" value="1"/>
</dbReference>
<dbReference type="FunFam" id="3.40.50.1100:FF:000053">
    <property type="entry name" value="1-aminocyclopropane-1-carboxylate deaminase"/>
    <property type="match status" value="1"/>
</dbReference>
<dbReference type="Gene3D" id="3.40.50.1100">
    <property type="match status" value="2"/>
</dbReference>
<dbReference type="HAMAP" id="MF_00807">
    <property type="entry name" value="ACC_deaminase"/>
    <property type="match status" value="1"/>
</dbReference>
<dbReference type="InterPro" id="IPR027278">
    <property type="entry name" value="ACCD_DCysDesulf"/>
</dbReference>
<dbReference type="InterPro" id="IPR005965">
    <property type="entry name" value="ACP_carboxylate_deaminase"/>
</dbReference>
<dbReference type="InterPro" id="IPR020601">
    <property type="entry name" value="ACP_carboxylate_deaminase_bac"/>
</dbReference>
<dbReference type="InterPro" id="IPR001926">
    <property type="entry name" value="TrpB-like_PALP"/>
</dbReference>
<dbReference type="InterPro" id="IPR036052">
    <property type="entry name" value="TrpB-like_PALP_sf"/>
</dbReference>
<dbReference type="NCBIfam" id="TIGR01274">
    <property type="entry name" value="ACC_deam"/>
    <property type="match status" value="1"/>
</dbReference>
<dbReference type="PANTHER" id="PTHR43780">
    <property type="entry name" value="1-AMINOCYCLOPROPANE-1-CARBOXYLATE DEAMINASE-RELATED"/>
    <property type="match status" value="1"/>
</dbReference>
<dbReference type="PANTHER" id="PTHR43780:SF2">
    <property type="entry name" value="1-AMINOCYCLOPROPANE-1-CARBOXYLATE DEAMINASE-RELATED"/>
    <property type="match status" value="1"/>
</dbReference>
<dbReference type="Pfam" id="PF00291">
    <property type="entry name" value="PALP"/>
    <property type="match status" value="1"/>
</dbReference>
<dbReference type="PIRSF" id="PIRSF006278">
    <property type="entry name" value="ACCD_DCysDesulf"/>
    <property type="match status" value="1"/>
</dbReference>
<dbReference type="SUPFAM" id="SSF53686">
    <property type="entry name" value="Tryptophan synthase beta subunit-like PLP-dependent enzymes"/>
    <property type="match status" value="1"/>
</dbReference>
<keyword id="KW-0378">Hydrolase</keyword>
<keyword id="KW-0663">Pyridoxal phosphate</keyword>
<keyword id="KW-1185">Reference proteome</keyword>
<evidence type="ECO:0000255" key="1">
    <source>
        <dbReference type="HAMAP-Rule" id="MF_00807"/>
    </source>
</evidence>
<proteinExistence type="inferred from homology"/>
<organism>
    <name type="scientific">Acidovorax ebreus (strain TPSY)</name>
    <name type="common">Diaphorobacter sp. (strain TPSY)</name>
    <dbReference type="NCBI Taxonomy" id="535289"/>
    <lineage>
        <taxon>Bacteria</taxon>
        <taxon>Pseudomonadati</taxon>
        <taxon>Pseudomonadota</taxon>
        <taxon>Betaproteobacteria</taxon>
        <taxon>Burkholderiales</taxon>
        <taxon>Comamonadaceae</taxon>
        <taxon>Diaphorobacter</taxon>
    </lineage>
</organism>
<comment type="function">
    <text evidence="1">Catalyzes a cyclopropane ring-opening reaction, the irreversible conversion of 1-aminocyclopropane-1-carboxylate (ACC) to ammonia and alpha-ketobutyrate. Allows growth on ACC as a nitrogen source.</text>
</comment>
<comment type="catalytic activity">
    <reaction evidence="1">
        <text>1-aminocyclopropane-1-carboxylate + H2O = 2-oxobutanoate + NH4(+)</text>
        <dbReference type="Rhea" id="RHEA:16933"/>
        <dbReference type="ChEBI" id="CHEBI:15377"/>
        <dbReference type="ChEBI" id="CHEBI:16763"/>
        <dbReference type="ChEBI" id="CHEBI:28938"/>
        <dbReference type="ChEBI" id="CHEBI:58360"/>
        <dbReference type="EC" id="3.5.99.7"/>
    </reaction>
</comment>
<comment type="cofactor">
    <cofactor evidence="1">
        <name>pyridoxal 5'-phosphate</name>
        <dbReference type="ChEBI" id="CHEBI:597326"/>
    </cofactor>
</comment>
<comment type="subunit">
    <text evidence="1">Homotrimer.</text>
</comment>
<comment type="similarity">
    <text evidence="1">Belongs to the ACC deaminase/D-cysteine desulfhydrase family.</text>
</comment>